<gene>
    <name type="primary">FSIP1</name>
    <name type="ORF">QtsA-12634</name>
    <name type="ORF">QtsA-15676</name>
</gene>
<protein>
    <recommendedName>
        <fullName>Fibrous sheath-interacting protein 1</fullName>
    </recommendedName>
</protein>
<evidence type="ECO:0000250" key="1">
    <source>
        <dbReference type="UniProtKB" id="Q66H16"/>
    </source>
</evidence>
<evidence type="ECO:0000255" key="2"/>
<evidence type="ECO:0000256" key="3">
    <source>
        <dbReference type="SAM" id="MobiDB-lite"/>
    </source>
</evidence>
<evidence type="ECO:0000305" key="4"/>
<keyword id="KW-0175">Coiled coil</keyword>
<keyword id="KW-0597">Phosphoprotein</keyword>
<keyword id="KW-1185">Reference proteome</keyword>
<proteinExistence type="evidence at transcript level"/>
<organism>
    <name type="scientific">Macaca fascicularis</name>
    <name type="common">Crab-eating macaque</name>
    <name type="synonym">Cynomolgus monkey</name>
    <dbReference type="NCBI Taxonomy" id="9541"/>
    <lineage>
        <taxon>Eukaryota</taxon>
        <taxon>Metazoa</taxon>
        <taxon>Chordata</taxon>
        <taxon>Craniata</taxon>
        <taxon>Vertebrata</taxon>
        <taxon>Euteleostomi</taxon>
        <taxon>Mammalia</taxon>
        <taxon>Eutheria</taxon>
        <taxon>Euarchontoglires</taxon>
        <taxon>Primates</taxon>
        <taxon>Haplorrhini</taxon>
        <taxon>Catarrhini</taxon>
        <taxon>Cercopithecidae</taxon>
        <taxon>Cercopithecinae</taxon>
        <taxon>Macaca</taxon>
    </lineage>
</organism>
<name>FSIP1_MACFA</name>
<sequence>MDIIKGNLDGISKPASNSRIRPGSRSSNASLEVLSTEPASCKVDTASNLNSGKEDHSESSNTENRRTSNDDKRESCSEKIKLAEEGSDEDLDLVQRQIIPECSDEHKLEELDSQLQDAIQKMKKLDKILAKTQRREKEIKKQGLEMRIKLWEEIKSAKYSEAWQSKEEMENTKKFLSLTAASEETVGPSHENEDSFSSVFHTQIPPEEYEKQMQKLSKDFTCDVERNESLIKAGKKPFSNTEKIELRGKHNQDFIKRNIELAKESRNPVVMIEREKKRLVELLKDLDEKDSGLSSSEGDQSGWVVPVKGYALAVTQHQQLAEIDIKLQELSAASPAISSFSPRLENQNNQEPDLDGEKNMEVTPGEKVLRNTKEQRDLRIRLREIDEKLRMMKENVLQSTSRLSEEQLKCLLDECIVKQKSIIKLSSEGENEDIEDVIPMFPQLSRSIISKLLNESGTKVQKTEAEDADMLESAEREASKGYYLTKALTGHRMSEALVTEVENMKCLQFSKNDIISDTKDYFMSKTLGIGRLKRPSFLDDPLYGITVSLSSEDQHLKLNSPEKTKADEQETKDAAEECKEP</sequence>
<comment type="similarity">
    <text evidence="4">Belongs to the FSIP1 family.</text>
</comment>
<comment type="sequence caution" evidence="4">
    <conflict type="erroneous initiation">
        <sequence resource="EMBL-CDS" id="BAB62994"/>
    </conflict>
</comment>
<accession>Q95LY3</accession>
<accession>Q95JX8</accession>
<dbReference type="EMBL" id="AB071058">
    <property type="protein sequence ID" value="BAB64451.1"/>
    <property type="molecule type" value="mRNA"/>
</dbReference>
<dbReference type="EMBL" id="AB070049">
    <property type="protein sequence ID" value="BAB62994.1"/>
    <property type="status" value="ALT_INIT"/>
    <property type="molecule type" value="mRNA"/>
</dbReference>
<dbReference type="SMR" id="Q95LY3"/>
<dbReference type="eggNOG" id="ENOG502RXFB">
    <property type="taxonomic scope" value="Eukaryota"/>
</dbReference>
<dbReference type="Proteomes" id="UP000233100">
    <property type="component" value="Unplaced"/>
</dbReference>
<dbReference type="InterPro" id="IPR026246">
    <property type="entry name" value="Fsip1"/>
</dbReference>
<dbReference type="PANTHER" id="PTHR22012">
    <property type="entry name" value="FIBROUS SHEATH INTERACTING PROTEIN 1"/>
    <property type="match status" value="1"/>
</dbReference>
<dbReference type="PANTHER" id="PTHR22012:SF2">
    <property type="entry name" value="FIBROUS SHEATH-INTERACTING PROTEIN 1"/>
    <property type="match status" value="1"/>
</dbReference>
<dbReference type="Pfam" id="PF15554">
    <property type="entry name" value="FSIP1"/>
    <property type="match status" value="1"/>
</dbReference>
<dbReference type="PRINTS" id="PR02075">
    <property type="entry name" value="FIBSHEATHIP1"/>
</dbReference>
<reference key="1">
    <citation type="journal article" date="2002" name="BMC Genomics">
        <title>Cynomolgus monkey testicular cDNAs for discovery of novel human genes in the human genome sequence.</title>
        <authorList>
            <person name="Osada N."/>
            <person name="Hida M."/>
            <person name="Kusuda J."/>
            <person name="Tanuma R."/>
            <person name="Hirata M."/>
            <person name="Suto Y."/>
            <person name="Hirai M."/>
            <person name="Terao K."/>
            <person name="Sugano S."/>
            <person name="Hashimoto K."/>
        </authorList>
    </citation>
    <scope>NUCLEOTIDE SEQUENCE [LARGE SCALE MRNA]</scope>
    <source>
        <tissue>Testis</tissue>
    </source>
</reference>
<reference key="2">
    <citation type="submission" date="2001-08" db="EMBL/GenBank/DDBJ databases">
        <title>Isolation of novel full-length cDNA clones from macaque testis cDNA libraries.</title>
        <authorList>
            <person name="Hashimoto K."/>
            <person name="Osada N."/>
            <person name="Hida M."/>
            <person name="Kusuda J."/>
            <person name="Tanuma R."/>
            <person name="Hirai M."/>
            <person name="Terao K."/>
            <person name="Sugano S."/>
        </authorList>
    </citation>
    <scope>NUCLEOTIDE SEQUENCE [LARGE SCALE MRNA] OF 79-581</scope>
    <source>
        <tissue>Testis</tissue>
    </source>
</reference>
<feature type="chain" id="PRO_0000314919" description="Fibrous sheath-interacting protein 1">
    <location>
        <begin position="1"/>
        <end position="581"/>
    </location>
</feature>
<feature type="region of interest" description="Disordered" evidence="3">
    <location>
        <begin position="1"/>
        <end position="77"/>
    </location>
</feature>
<feature type="region of interest" description="Disordered" evidence="3">
    <location>
        <begin position="338"/>
        <end position="370"/>
    </location>
</feature>
<feature type="region of interest" description="Disordered" evidence="3">
    <location>
        <begin position="553"/>
        <end position="581"/>
    </location>
</feature>
<feature type="coiled-coil region" evidence="2">
    <location>
        <begin position="103"/>
        <end position="153"/>
    </location>
</feature>
<feature type="compositionally biased region" description="Polar residues" evidence="3">
    <location>
        <begin position="14"/>
        <end position="30"/>
    </location>
</feature>
<feature type="compositionally biased region" description="Basic and acidic residues" evidence="3">
    <location>
        <begin position="52"/>
        <end position="77"/>
    </location>
</feature>
<feature type="modified residue" description="Phosphoserine" evidence="1">
    <location>
        <position position="87"/>
    </location>
</feature>
<feature type="sequence conflict" description="In Ref. 2; BAB62994." evidence="4" ref="2">
    <original>S</original>
    <variation>N</variation>
    <location>
        <position position="195"/>
    </location>
</feature>
<feature type="sequence conflict" description="In Ref. 2; BAB62994." evidence="4" ref="2">
    <original>D</original>
    <variation>H</variation>
    <location>
        <position position="377"/>
    </location>
</feature>